<sequence>MDFPGGSGRQQQLPPMTPLPLARQGSVYSLTFDEFQSTLGGVGKDFGSMNMDELLRSIWTAEESHAVGAATTTTATTASVAAAEHAAVGAPPVQRQGSLTLPRTLSQKTVDEVWRDMMCFGGGGASTAPAAAEPPPPAHRQQTLGEITLEEFLVRAGVVREDMSVPPVPPAPTPTAAAVPPPPPPQQQTPMLFGQSNVFPPMVPPLSLGNGLVSGAVGHGGGGAASLVSPVRPVSSNGFGKMEGGDLSSLSPSPVPYVFKGGLRGRKAPGIEKVVERRQRRMIKNRESAARSRQRKQAYMMELEAEVAKLKELNDELQKKQDEMLEQQKNEVLERMSRQVGPTAKRICLRRTLTGPW</sequence>
<keyword id="KW-0938">Abscisic acid signaling pathway</keyword>
<keyword id="KW-0238">DNA-binding</keyword>
<keyword id="KW-0539">Nucleus</keyword>
<keyword id="KW-1185">Reference proteome</keyword>
<keyword id="KW-0346">Stress response</keyword>
<keyword id="KW-0804">Transcription</keyword>
<keyword id="KW-0805">Transcription regulation</keyword>
<accession>Q6Z312</accession>
<gene>
    <name evidence="9" type="primary">BZIP23</name>
    <name evidence="8" type="synonym">ABF2</name>
    <name evidence="10" type="synonym">AREB1</name>
    <name evidence="14" type="ordered locus">Os02g0766700</name>
    <name evidence="11" type="ordered locus">LOC_Os02g52780</name>
    <name evidence="13" type="ORF">OJ1004_A11.20</name>
    <name evidence="12" type="ORF">P0539D10.39</name>
</gene>
<protein>
    <recommendedName>
        <fullName evidence="11">bZIP transcription factor 23</fullName>
        <shortName evidence="9">OsBZIP23</shortName>
    </recommendedName>
    <alternativeName>
        <fullName evidence="11">ABRE-binding factor 2</fullName>
        <shortName evidence="8">OsABF2</shortName>
    </alternativeName>
    <alternativeName>
        <fullName evidence="11">Abscisic acid responsive elements-binding factor 1</fullName>
        <shortName evidence="10">OsAREB1</shortName>
    </alternativeName>
</protein>
<feature type="chain" id="PRO_0000439020" description="bZIP transcription factor 23">
    <location>
        <begin position="1"/>
        <end position="357"/>
    </location>
</feature>
<feature type="domain" description="bZIP" evidence="1">
    <location>
        <begin position="275"/>
        <end position="338"/>
    </location>
</feature>
<feature type="region of interest" description="Disordered" evidence="2">
    <location>
        <begin position="166"/>
        <end position="185"/>
    </location>
</feature>
<feature type="region of interest" description="Basic motif" evidence="1">
    <location>
        <begin position="277"/>
        <end position="296"/>
    </location>
</feature>
<feature type="region of interest" description="Leucine-zipper" evidence="1">
    <location>
        <begin position="303"/>
        <end position="317"/>
    </location>
</feature>
<name>BZP23_ORYSJ</name>
<evidence type="ECO:0000255" key="1">
    <source>
        <dbReference type="PROSITE-ProRule" id="PRU00978"/>
    </source>
</evidence>
<evidence type="ECO:0000256" key="2">
    <source>
        <dbReference type="SAM" id="MobiDB-lite"/>
    </source>
</evidence>
<evidence type="ECO:0000269" key="3">
    <source>
    </source>
</evidence>
<evidence type="ECO:0000269" key="4">
    <source>
    </source>
</evidence>
<evidence type="ECO:0000269" key="5">
    <source>
    </source>
</evidence>
<evidence type="ECO:0000269" key="6">
    <source>
    </source>
</evidence>
<evidence type="ECO:0000269" key="7">
    <source>
    </source>
</evidence>
<evidence type="ECO:0000303" key="8">
    <source>
    </source>
</evidence>
<evidence type="ECO:0000303" key="9">
    <source>
    </source>
</evidence>
<evidence type="ECO:0000303" key="10">
    <source>
    </source>
</evidence>
<evidence type="ECO:0000305" key="11"/>
<evidence type="ECO:0000312" key="12">
    <source>
        <dbReference type="EMBL" id="BAD17130.1"/>
    </source>
</evidence>
<evidence type="ECO:0000312" key="13">
    <source>
        <dbReference type="EMBL" id="BAD17318.1"/>
    </source>
</evidence>
<evidence type="ECO:0000312" key="14">
    <source>
        <dbReference type="EMBL" id="BAF10139.1"/>
    </source>
</evidence>
<proteinExistence type="evidence at transcript level"/>
<dbReference type="EMBL" id="AP004817">
    <property type="protein sequence ID" value="BAD17130.1"/>
    <property type="molecule type" value="Genomic_DNA"/>
</dbReference>
<dbReference type="EMBL" id="AP005287">
    <property type="protein sequence ID" value="BAD17318.1"/>
    <property type="molecule type" value="Genomic_DNA"/>
</dbReference>
<dbReference type="EMBL" id="AP008208">
    <property type="protein sequence ID" value="BAF10139.1"/>
    <property type="molecule type" value="Genomic_DNA"/>
</dbReference>
<dbReference type="EMBL" id="AP014958">
    <property type="protein sequence ID" value="BAS81069.1"/>
    <property type="molecule type" value="Genomic_DNA"/>
</dbReference>
<dbReference type="EMBL" id="AK072062">
    <property type="protein sequence ID" value="BAG92808.1"/>
    <property type="molecule type" value="mRNA"/>
</dbReference>
<dbReference type="RefSeq" id="XP_015625853.1">
    <property type="nucleotide sequence ID" value="XM_015770367.1"/>
</dbReference>
<dbReference type="SMR" id="Q6Z312"/>
<dbReference type="FunCoup" id="Q6Z312">
    <property type="interactions" value="152"/>
</dbReference>
<dbReference type="STRING" id="39947.Q6Z312"/>
<dbReference type="PaxDb" id="39947-Q6Z312"/>
<dbReference type="EnsemblPlants" id="Os02t0766700-01">
    <property type="protein sequence ID" value="Os02t0766700-01"/>
    <property type="gene ID" value="Os02g0766700"/>
</dbReference>
<dbReference type="Gramene" id="Os02t0766700-01">
    <property type="protein sequence ID" value="Os02t0766700-01"/>
    <property type="gene ID" value="Os02g0766700"/>
</dbReference>
<dbReference type="KEGG" id="dosa:Os02g0766700"/>
<dbReference type="eggNOG" id="ENOG502QPP6">
    <property type="taxonomic scope" value="Eukaryota"/>
</dbReference>
<dbReference type="HOGENOM" id="CLU_043238_1_0_1"/>
<dbReference type="InParanoid" id="Q6Z312"/>
<dbReference type="OMA" id="VWRDMMC"/>
<dbReference type="OrthoDB" id="1927218at2759"/>
<dbReference type="PlantReactome" id="R-OSA-3899351">
    <property type="pathway name" value="Abscisic acid (ABA) mediated signaling"/>
</dbReference>
<dbReference type="Proteomes" id="UP000000763">
    <property type="component" value="Chromosome 2"/>
</dbReference>
<dbReference type="Proteomes" id="UP000059680">
    <property type="component" value="Chromosome 2"/>
</dbReference>
<dbReference type="GO" id="GO:0005634">
    <property type="term" value="C:nucleus"/>
    <property type="evidence" value="ECO:0000314"/>
    <property type="project" value="UniProtKB"/>
</dbReference>
<dbReference type="GO" id="GO:0003677">
    <property type="term" value="F:DNA binding"/>
    <property type="evidence" value="ECO:0007669"/>
    <property type="project" value="UniProtKB-KW"/>
</dbReference>
<dbReference type="GO" id="GO:0003700">
    <property type="term" value="F:DNA-binding transcription factor activity"/>
    <property type="evidence" value="ECO:0000314"/>
    <property type="project" value="UniProtKB"/>
</dbReference>
<dbReference type="GO" id="GO:0009738">
    <property type="term" value="P:abscisic acid-activated signaling pathway"/>
    <property type="evidence" value="ECO:0000314"/>
    <property type="project" value="UniProtKB"/>
</dbReference>
<dbReference type="GO" id="GO:0045893">
    <property type="term" value="P:positive regulation of DNA-templated transcription"/>
    <property type="evidence" value="ECO:0007669"/>
    <property type="project" value="InterPro"/>
</dbReference>
<dbReference type="GO" id="GO:0009651">
    <property type="term" value="P:response to salt stress"/>
    <property type="evidence" value="ECO:0000315"/>
    <property type="project" value="UniProtKB"/>
</dbReference>
<dbReference type="GO" id="GO:0009414">
    <property type="term" value="P:response to water deprivation"/>
    <property type="evidence" value="ECO:0000315"/>
    <property type="project" value="UniProtKB"/>
</dbReference>
<dbReference type="CDD" id="cd14707">
    <property type="entry name" value="bZIP_plant_BZIP46"/>
    <property type="match status" value="1"/>
</dbReference>
<dbReference type="FunFam" id="1.20.5.170:FF:000048">
    <property type="entry name" value="ABSCISIC ACID-INSENSITIVE 5-like protein 5"/>
    <property type="match status" value="1"/>
</dbReference>
<dbReference type="Gene3D" id="1.20.5.170">
    <property type="match status" value="1"/>
</dbReference>
<dbReference type="InterPro" id="IPR004827">
    <property type="entry name" value="bZIP"/>
</dbReference>
<dbReference type="InterPro" id="IPR043452">
    <property type="entry name" value="BZIP46-like"/>
</dbReference>
<dbReference type="InterPro" id="IPR046347">
    <property type="entry name" value="bZIP_sf"/>
</dbReference>
<dbReference type="PANTHER" id="PTHR22952:SF103">
    <property type="entry name" value="BZIP TRANSCRIPTION FACTOR 23"/>
    <property type="match status" value="1"/>
</dbReference>
<dbReference type="PANTHER" id="PTHR22952">
    <property type="entry name" value="CAMP-RESPONSE ELEMENT BINDING PROTEIN-RELATED"/>
    <property type="match status" value="1"/>
</dbReference>
<dbReference type="Pfam" id="PF00170">
    <property type="entry name" value="bZIP_1"/>
    <property type="match status" value="1"/>
</dbReference>
<dbReference type="SMART" id="SM00338">
    <property type="entry name" value="BRLZ"/>
    <property type="match status" value="1"/>
</dbReference>
<dbReference type="SUPFAM" id="SSF57959">
    <property type="entry name" value="Leucine zipper domain"/>
    <property type="match status" value="1"/>
</dbReference>
<dbReference type="PROSITE" id="PS50217">
    <property type="entry name" value="BZIP"/>
    <property type="match status" value="1"/>
</dbReference>
<dbReference type="PROSITE" id="PS00036">
    <property type="entry name" value="BZIP_BASIC"/>
    <property type="match status" value="1"/>
</dbReference>
<organism>
    <name type="scientific">Oryza sativa subsp. japonica</name>
    <name type="common">Rice</name>
    <dbReference type="NCBI Taxonomy" id="39947"/>
    <lineage>
        <taxon>Eukaryota</taxon>
        <taxon>Viridiplantae</taxon>
        <taxon>Streptophyta</taxon>
        <taxon>Embryophyta</taxon>
        <taxon>Tracheophyta</taxon>
        <taxon>Spermatophyta</taxon>
        <taxon>Magnoliopsida</taxon>
        <taxon>Liliopsida</taxon>
        <taxon>Poales</taxon>
        <taxon>Poaceae</taxon>
        <taxon>BOP clade</taxon>
        <taxon>Oryzoideae</taxon>
        <taxon>Oryzeae</taxon>
        <taxon>Oryzinae</taxon>
        <taxon>Oryza</taxon>
        <taxon>Oryza sativa</taxon>
    </lineage>
</organism>
<comment type="function">
    <text evidence="4 5 6 7">Transcriptional activator that mediates abscisic acid (ABA) signaling (PubMed:18931143, PubMed:19947981, PubMed:27325665, PubMed:27424498). Can regulate the expression of a wide spectrum of stress-related genes in response to abiotic stresses through an ABA-dependent regulation pathway. Confers ABA-dependent drought and salinity tolerance (PubMed:18931143, PubMed:27325665). Binds specifically to the ABA-responsive elements (ABRE) in the promoter of target genes to mediate stress-responsive ABA signaling (PubMed:27325665, PubMed:27424498).</text>
</comment>
<comment type="subcellular location">
    <subcellularLocation>
        <location evidence="1 4">Nucleus</location>
    </subcellularLocation>
</comment>
<comment type="tissue specificity">
    <text evidence="4">Highly expressed in leaves.</text>
</comment>
<comment type="induction">
    <text evidence="3 4">Induced by abscisic acid (ABA) (PubMed:18315698, PubMed:18931143). Induced by drought, salt and osmotic stresses (PubMed:18931143).</text>
</comment>
<comment type="disruption phenotype">
    <text evidence="4">Slight decrease in plant height and increased sensitivity to drought and salt stresses.</text>
</comment>
<comment type="similarity">
    <text evidence="11">Belongs to the bZIP family. ABI5 subfamily.</text>
</comment>
<reference key="1">
    <citation type="journal article" date="2005" name="Nature">
        <title>The map-based sequence of the rice genome.</title>
        <authorList>
            <consortium name="International rice genome sequencing project (IRGSP)"/>
        </authorList>
    </citation>
    <scope>NUCLEOTIDE SEQUENCE [LARGE SCALE GENOMIC DNA]</scope>
    <source>
        <strain>cv. Nipponbare</strain>
    </source>
</reference>
<reference key="2">
    <citation type="journal article" date="2008" name="Nucleic Acids Res.">
        <title>The rice annotation project database (RAP-DB): 2008 update.</title>
        <authorList>
            <consortium name="The rice annotation project (RAP)"/>
        </authorList>
    </citation>
    <scope>GENOME REANNOTATION</scope>
    <source>
        <strain>cv. Nipponbare</strain>
    </source>
</reference>
<reference key="3">
    <citation type="journal article" date="2013" name="Rice">
        <title>Improvement of the Oryza sativa Nipponbare reference genome using next generation sequence and optical map data.</title>
        <authorList>
            <person name="Kawahara Y."/>
            <person name="de la Bastide M."/>
            <person name="Hamilton J.P."/>
            <person name="Kanamori H."/>
            <person name="McCombie W.R."/>
            <person name="Ouyang S."/>
            <person name="Schwartz D.C."/>
            <person name="Tanaka T."/>
            <person name="Wu J."/>
            <person name="Zhou S."/>
            <person name="Childs K.L."/>
            <person name="Davidson R.M."/>
            <person name="Lin H."/>
            <person name="Quesada-Ocampo L."/>
            <person name="Vaillancourt B."/>
            <person name="Sakai H."/>
            <person name="Lee S.S."/>
            <person name="Kim J."/>
            <person name="Numa H."/>
            <person name="Itoh T."/>
            <person name="Buell C.R."/>
            <person name="Matsumoto T."/>
        </authorList>
    </citation>
    <scope>GENOME REANNOTATION</scope>
    <source>
        <strain>cv. Nipponbare</strain>
    </source>
</reference>
<reference key="4">
    <citation type="journal article" date="2003" name="Science">
        <title>Collection, mapping, and annotation of over 28,000 cDNA clones from japonica rice.</title>
        <authorList>
            <consortium name="The rice full-length cDNA consortium"/>
        </authorList>
    </citation>
    <scope>NUCLEOTIDE SEQUENCE [LARGE SCALE MRNA]</scope>
    <source>
        <strain>cv. Nipponbare</strain>
    </source>
</reference>
<reference key="5">
    <citation type="journal article" date="2008" name="New Phytol.">
        <title>Abscisic acid regulates gene expression in cortical fiber cells and silica cells of rice shoots.</title>
        <authorList>
            <person name="Shobbar Z.S."/>
            <person name="Oane R."/>
            <person name="Gamuyao R."/>
            <person name="De Palma J."/>
            <person name="Malboobi M.A."/>
            <person name="Karimzadeh G."/>
            <person name="Javaran M.J."/>
            <person name="Bennett J."/>
        </authorList>
    </citation>
    <scope>INDUCTION BY ABSCISIC ACID</scope>
</reference>
<reference key="6">
    <citation type="journal article" date="2008" name="Plant Physiol.">
        <title>Characterization of OsbZIP23 as a key player of the basic leucine zipper transcription factor family for conferring abscisic acid sensitivity and salinity and drought tolerance in rice.</title>
        <authorList>
            <person name="Xiang Y."/>
            <person name="Tang N."/>
            <person name="Du H."/>
            <person name="Ye H."/>
            <person name="Xiong L."/>
        </authorList>
    </citation>
    <scope>FUNCTION</scope>
    <scope>SUBCELLULAR LOCATION</scope>
    <scope>TISSUE SPECIFICITY</scope>
    <scope>INDUCTION</scope>
    <scope>DISRUPTION PHENOTYPE</scope>
</reference>
<reference key="7">
    <citation type="journal article" date="2010" name="Plant J.">
        <title>AREB1, AREB2, and ABF3 are master transcription factors that cooperatively regulate ABRE-dependent ABA signaling involved in drought stress tolerance and require ABA for full activation.</title>
        <authorList>
            <person name="Yoshida T."/>
            <person name="Fujita Y."/>
            <person name="Sayama H."/>
            <person name="Kidokoro S."/>
            <person name="Maruyama K."/>
            <person name="Mizoi J."/>
            <person name="Shinozaki K."/>
            <person name="Yamaguchi-Shinozaki K."/>
        </authorList>
    </citation>
    <scope>FUNCTION</scope>
</reference>
<reference key="8">
    <citation type="journal article" date="2016" name="Dev. Cell">
        <title>OsREM4.1 interacts with OsSERK1 to coordinate the interlinking between abscisic acid and brassinosteroid signaling in rice.</title>
        <authorList>
            <person name="Gui J."/>
            <person name="Zheng S."/>
            <person name="Liu C."/>
            <person name="Shen J."/>
            <person name="Li J."/>
            <person name="Li L."/>
        </authorList>
    </citation>
    <scope>FUNCTION</scope>
</reference>
<reference key="9">
    <citation type="journal article" date="2016" name="Plant Physiol.">
        <title>Feedback Regulation of ABA signaling and biosynthesis by a bZIP transcription factor targets drought-resistance-related genes.</title>
        <authorList>
            <person name="Zong W."/>
            <person name="Tang N."/>
            <person name="Yang J."/>
            <person name="Peng L."/>
            <person name="Ma S."/>
            <person name="Xu Y."/>
            <person name="Li G."/>
            <person name="Xiong L."/>
        </authorList>
    </citation>
    <scope>FUNCTION</scope>
</reference>